<proteinExistence type="inferred from homology"/>
<gene>
    <name type="primary">USP37</name>
</gene>
<organism>
    <name type="scientific">Sus scrofa</name>
    <name type="common">Pig</name>
    <dbReference type="NCBI Taxonomy" id="9823"/>
    <lineage>
        <taxon>Eukaryota</taxon>
        <taxon>Metazoa</taxon>
        <taxon>Chordata</taxon>
        <taxon>Craniata</taxon>
        <taxon>Vertebrata</taxon>
        <taxon>Euteleostomi</taxon>
        <taxon>Mammalia</taxon>
        <taxon>Eutheria</taxon>
        <taxon>Laurasiatheria</taxon>
        <taxon>Artiodactyla</taxon>
        <taxon>Suina</taxon>
        <taxon>Suidae</taxon>
        <taxon>Sus</taxon>
    </lineage>
</organism>
<reference key="1">
    <citation type="submission" date="2009-11" db="EMBL/GenBank/DDBJ databases">
        <authorList>
            <consortium name="Swine Genome Sequencing Consortium."/>
        </authorList>
    </citation>
    <scope>NUCLEOTIDE SEQUENCE [LARGE SCALE GENOMIC DNA]</scope>
    <source>
        <strain>Landrace</strain>
    </source>
</reference>
<dbReference type="EC" id="3.4.19.12" evidence="2"/>
<dbReference type="EMBL" id="CU570813">
    <property type="status" value="NOT_ANNOTATED_CDS"/>
    <property type="molecule type" value="Genomic_DNA"/>
</dbReference>
<dbReference type="SMR" id="F1SRY5"/>
<dbReference type="FunCoup" id="F1SRY5">
    <property type="interactions" value="1874"/>
</dbReference>
<dbReference type="STRING" id="9823.ENSSSCP00000017157"/>
<dbReference type="GlyGen" id="F1SRY5">
    <property type="glycosylation" value="1 site"/>
</dbReference>
<dbReference type="PaxDb" id="9823-ENSSSCP00000017157"/>
<dbReference type="eggNOG" id="KOG1868">
    <property type="taxonomic scope" value="Eukaryota"/>
</dbReference>
<dbReference type="InParanoid" id="F1SRY5"/>
<dbReference type="TreeFam" id="TF323032"/>
<dbReference type="Proteomes" id="UP000008227">
    <property type="component" value="Unplaced"/>
</dbReference>
<dbReference type="Proteomes" id="UP000314985">
    <property type="component" value="Unplaced"/>
</dbReference>
<dbReference type="Proteomes" id="UP000694570">
    <property type="component" value="Unplaced"/>
</dbReference>
<dbReference type="Proteomes" id="UP000694571">
    <property type="component" value="Unplaced"/>
</dbReference>
<dbReference type="Proteomes" id="UP000694720">
    <property type="component" value="Unplaced"/>
</dbReference>
<dbReference type="Proteomes" id="UP000694722">
    <property type="component" value="Unplaced"/>
</dbReference>
<dbReference type="Proteomes" id="UP000694723">
    <property type="component" value="Unplaced"/>
</dbReference>
<dbReference type="Proteomes" id="UP000694724">
    <property type="component" value="Unplaced"/>
</dbReference>
<dbReference type="Proteomes" id="UP000694725">
    <property type="component" value="Unplaced"/>
</dbReference>
<dbReference type="Proteomes" id="UP000694726">
    <property type="component" value="Unplaced"/>
</dbReference>
<dbReference type="Proteomes" id="UP000694727">
    <property type="component" value="Unplaced"/>
</dbReference>
<dbReference type="Proteomes" id="UP000694728">
    <property type="component" value="Unplaced"/>
</dbReference>
<dbReference type="GO" id="GO:0005694">
    <property type="term" value="C:chromosome"/>
    <property type="evidence" value="ECO:0007669"/>
    <property type="project" value="UniProtKB-SubCell"/>
</dbReference>
<dbReference type="GO" id="GO:0005829">
    <property type="term" value="C:cytosol"/>
    <property type="evidence" value="ECO:0000318"/>
    <property type="project" value="GO_Central"/>
</dbReference>
<dbReference type="GO" id="GO:0005634">
    <property type="term" value="C:nucleus"/>
    <property type="evidence" value="ECO:0000318"/>
    <property type="project" value="GO_Central"/>
</dbReference>
<dbReference type="GO" id="GO:0004843">
    <property type="term" value="F:cysteine-type deubiquitinase activity"/>
    <property type="evidence" value="ECO:0000250"/>
    <property type="project" value="UniProtKB"/>
</dbReference>
<dbReference type="GO" id="GO:0004197">
    <property type="term" value="F:cysteine-type endopeptidase activity"/>
    <property type="evidence" value="ECO:0000250"/>
    <property type="project" value="UniProtKB"/>
</dbReference>
<dbReference type="GO" id="GO:0051301">
    <property type="term" value="P:cell division"/>
    <property type="evidence" value="ECO:0007669"/>
    <property type="project" value="UniProtKB-KW"/>
</dbReference>
<dbReference type="GO" id="GO:0000082">
    <property type="term" value="P:G1/S transition of mitotic cell cycle"/>
    <property type="evidence" value="ECO:0000250"/>
    <property type="project" value="UniProtKB"/>
</dbReference>
<dbReference type="GO" id="GO:0016579">
    <property type="term" value="P:protein deubiquitination"/>
    <property type="evidence" value="ECO:0000250"/>
    <property type="project" value="UniProtKB"/>
</dbReference>
<dbReference type="GO" id="GO:0035871">
    <property type="term" value="P:protein K11-linked deubiquitination"/>
    <property type="evidence" value="ECO:0000250"/>
    <property type="project" value="UniProtKB"/>
</dbReference>
<dbReference type="GO" id="GO:0071108">
    <property type="term" value="P:protein K48-linked deubiquitination"/>
    <property type="evidence" value="ECO:0000250"/>
    <property type="project" value="UniProtKB"/>
</dbReference>
<dbReference type="GO" id="GO:0006508">
    <property type="term" value="P:proteolysis"/>
    <property type="evidence" value="ECO:0007669"/>
    <property type="project" value="UniProtKB-KW"/>
</dbReference>
<dbReference type="GO" id="GO:0006275">
    <property type="term" value="P:regulation of DNA replication"/>
    <property type="evidence" value="ECO:0000250"/>
    <property type="project" value="UniProtKB"/>
</dbReference>
<dbReference type="GO" id="GO:0031647">
    <property type="term" value="P:regulation of protein stability"/>
    <property type="evidence" value="ECO:0000318"/>
    <property type="project" value="GO_Central"/>
</dbReference>
<dbReference type="CDD" id="cd02257">
    <property type="entry name" value="Peptidase_C19"/>
    <property type="match status" value="2"/>
</dbReference>
<dbReference type="CDD" id="cd13312">
    <property type="entry name" value="PH_USP37_like"/>
    <property type="match status" value="1"/>
</dbReference>
<dbReference type="FunFam" id="2.30.29.180:FF:000001">
    <property type="entry name" value="Ubiquitin carboxyl-terminal hydrolase 37"/>
    <property type="match status" value="1"/>
</dbReference>
<dbReference type="FunFam" id="3.90.70.10:FF:000040">
    <property type="entry name" value="Ubiquitin carboxyl-terminal hydrolase 37"/>
    <property type="match status" value="1"/>
</dbReference>
<dbReference type="FunFam" id="3.90.70.10:FF:000287">
    <property type="entry name" value="Ubiquitin specific peptidase 37"/>
    <property type="match status" value="1"/>
</dbReference>
<dbReference type="Gene3D" id="3.90.70.10">
    <property type="entry name" value="Cysteine proteinases"/>
    <property type="match status" value="2"/>
</dbReference>
<dbReference type="Gene3D" id="2.30.29.180">
    <property type="entry name" value="Ubiquitin carboxyl-terminal hydrolase 26/29/37, pleckstrin homology-like domain"/>
    <property type="match status" value="1"/>
</dbReference>
<dbReference type="InterPro" id="IPR038765">
    <property type="entry name" value="Papain-like_cys_pep_sf"/>
</dbReference>
<dbReference type="InterPro" id="IPR050164">
    <property type="entry name" value="Peptidase_C19"/>
</dbReference>
<dbReference type="InterPro" id="IPR001394">
    <property type="entry name" value="Peptidase_C19_UCH"/>
</dbReference>
<dbReference type="InterPro" id="IPR003903">
    <property type="entry name" value="UIM_dom"/>
</dbReference>
<dbReference type="InterPro" id="IPR032069">
    <property type="entry name" value="USP37-like_PH"/>
</dbReference>
<dbReference type="InterPro" id="IPR038093">
    <property type="entry name" value="USP37-like_PH_sf"/>
</dbReference>
<dbReference type="InterPro" id="IPR018200">
    <property type="entry name" value="USP_CS"/>
</dbReference>
<dbReference type="InterPro" id="IPR028889">
    <property type="entry name" value="USP_dom"/>
</dbReference>
<dbReference type="PANTHER" id="PTHR24006">
    <property type="entry name" value="UBIQUITIN CARBOXYL-TERMINAL HYDROLASE"/>
    <property type="match status" value="1"/>
</dbReference>
<dbReference type="PANTHER" id="PTHR24006:SF686">
    <property type="entry name" value="UBIQUITIN CARBOXYL-TERMINAL HYDROLASE 37"/>
    <property type="match status" value="1"/>
</dbReference>
<dbReference type="Pfam" id="PF00443">
    <property type="entry name" value="UCH"/>
    <property type="match status" value="1"/>
</dbReference>
<dbReference type="Pfam" id="PF16674">
    <property type="entry name" value="UCH_N"/>
    <property type="match status" value="1"/>
</dbReference>
<dbReference type="Pfam" id="PF02809">
    <property type="entry name" value="UIM"/>
    <property type="match status" value="3"/>
</dbReference>
<dbReference type="SMART" id="SM00726">
    <property type="entry name" value="UIM"/>
    <property type="match status" value="3"/>
</dbReference>
<dbReference type="SUPFAM" id="SSF54001">
    <property type="entry name" value="Cysteine proteinases"/>
    <property type="match status" value="1"/>
</dbReference>
<dbReference type="PROSITE" id="PS50330">
    <property type="entry name" value="UIM"/>
    <property type="match status" value="3"/>
</dbReference>
<dbReference type="PROSITE" id="PS00972">
    <property type="entry name" value="USP_1"/>
    <property type="match status" value="1"/>
</dbReference>
<dbReference type="PROSITE" id="PS00973">
    <property type="entry name" value="USP_2"/>
    <property type="match status" value="1"/>
</dbReference>
<dbReference type="PROSITE" id="PS50235">
    <property type="entry name" value="USP_3"/>
    <property type="match status" value="1"/>
</dbReference>
<accession>F1SRY5</accession>
<evidence type="ECO:0000250" key="1"/>
<evidence type="ECO:0000250" key="2">
    <source>
        <dbReference type="UniProtKB" id="Q86T82"/>
    </source>
</evidence>
<evidence type="ECO:0000255" key="3">
    <source>
        <dbReference type="PROSITE-ProRule" id="PRU00213"/>
    </source>
</evidence>
<evidence type="ECO:0000255" key="4">
    <source>
        <dbReference type="PROSITE-ProRule" id="PRU10092"/>
    </source>
</evidence>
<evidence type="ECO:0000255" key="5">
    <source>
        <dbReference type="PROSITE-ProRule" id="PRU10093"/>
    </source>
</evidence>
<evidence type="ECO:0000256" key="6">
    <source>
        <dbReference type="SAM" id="MobiDB-lite"/>
    </source>
</evidence>
<evidence type="ECO:0000305" key="7"/>
<protein>
    <recommendedName>
        <fullName>Ubiquitin carboxyl-terminal hydrolase 37</fullName>
        <ecNumber evidence="2">3.4.19.12</ecNumber>
    </recommendedName>
    <alternativeName>
        <fullName>Deubiquitinating enzyme 37</fullName>
    </alternativeName>
    <alternativeName>
        <fullName>Ubiquitin thioesterase 37</fullName>
    </alternativeName>
    <alternativeName>
        <fullName>Ubiquitin-specific-processing protease 37</fullName>
    </alternativeName>
</protein>
<comment type="function">
    <text evidence="2">Deubiquitinase that plays a role in different processes including cell cycle regulation, DNA replication or DNA damage response. Antagonizes the anaphase-promoting complex (APC/C) during G1/S transition by mediating deubiquitination of cyclin-A (CCNA1 and CCNA2), thereby promoting S phase entry. Specifically mediates deubiquitination of 'Lys-11'-linked polyubiquitin chains, a specific ubiquitin-linkage type mediated by the APC/C complex. Phosphorylation at Ser-628 during G1/S phase maximizes the deubiquitinase activity, leading to prevent degradation of cyclin-A (CCNA1 and CCNA2). Plays an important role in the regulation of DNA replication by stabilizing the licensing factor CDT1. Also plays an essential role beyond S-phase entry to promote the efficiency and fidelity of replication by deubiquitinating checkpoint kinase 1/CHK1, promoting its stability. Sustains the DNA damage response (DDR) by deubiquitinating and stabilizing the ATP-dependent DNA helicase BLM. Mechanistically, DNA double-strand breaks (DSB) promotes ATM-mediated phosphorylation of USP37 and enhances the binding between USP37 and BLM. Promotes cell migration by deubiquitinating and stabilizing the epithelial-mesenchymal transition (EMT)-inducing transcription factor SNAI. Plays a role in the regulation of mitotic spindle assembly and mitotic progression by associating with chromatin-associated WAPL and stabilizing it through deubiquitination.</text>
</comment>
<comment type="catalytic activity">
    <reaction evidence="2">
        <text>Thiol-dependent hydrolysis of ester, thioester, amide, peptide and isopeptide bonds formed by the C-terminal Gly of ubiquitin (a 76-residue protein attached to proteins as an intracellular targeting signal).</text>
        <dbReference type="EC" id="3.4.19.12"/>
    </reaction>
</comment>
<comment type="subunit">
    <text evidence="2">Interacts with FZR1/CDH1. Interacts with CDT1.</text>
</comment>
<comment type="subcellular location">
    <subcellularLocation>
        <location evidence="2">Nucleus</location>
    </subcellularLocation>
    <subcellularLocation>
        <location evidence="2">Chromosome</location>
    </subcellularLocation>
</comment>
<comment type="domain">
    <text evidence="2">The KEN box 3 is required for interaction with FZR1/CDH1 and is essential for APC(CDH1)-mediated ubiquitination.</text>
</comment>
<comment type="PTM">
    <text evidence="2">Polyubiquitinated via 'Lys-11'-linked ubiquitin by the APC(CDH1) complex during late mitosis, leading to its degradation. Able to mediate auto-deubiquitination.</text>
</comment>
<comment type="PTM">
    <text evidence="2">Phosphorylated at Ser-631 by CDK2 during G1/S phase but not during mitosis; phosphorylation at Ser-631 is required for deubiquitinase activity. Also polyubiquitinated during early G1 phase, without leading to degradation. Phosphorylated at Ser-115 by ATM following DNA damage, which in turn increases its deubiquitination activity towards BLM.</text>
</comment>
<comment type="similarity">
    <text evidence="7">Belongs to the peptidase C19 family.</text>
</comment>
<feature type="chain" id="PRO_0000412646" description="Ubiquitin carboxyl-terminal hydrolase 37">
    <location>
        <begin position="1"/>
        <end position="982"/>
    </location>
</feature>
<feature type="domain" description="USP">
    <location>
        <begin position="343"/>
        <end position="954"/>
    </location>
</feature>
<feature type="domain" description="UIM 1" evidence="3">
    <location>
        <begin position="707"/>
        <end position="726"/>
    </location>
</feature>
<feature type="domain" description="UIM 2" evidence="3">
    <location>
        <begin position="809"/>
        <end position="828"/>
    </location>
</feature>
<feature type="domain" description="UIM 3" evidence="3">
    <location>
        <begin position="831"/>
        <end position="850"/>
    </location>
</feature>
<feature type="region of interest" description="Disordered" evidence="6">
    <location>
        <begin position="128"/>
        <end position="162"/>
    </location>
</feature>
<feature type="region of interest" description="Disordered" evidence="6">
    <location>
        <begin position="183"/>
        <end position="307"/>
    </location>
</feature>
<feature type="region of interest" description="Disordered" evidence="6">
    <location>
        <begin position="672"/>
        <end position="705"/>
    </location>
</feature>
<feature type="region of interest" description="Disordered" evidence="6">
    <location>
        <begin position="720"/>
        <end position="798"/>
    </location>
</feature>
<feature type="short sequence motif" description="KEN box 1" evidence="1">
    <location>
        <begin position="32"/>
        <end position="34"/>
    </location>
</feature>
<feature type="short sequence motif" description="D-box 1" evidence="1">
    <location>
        <begin position="71"/>
        <end position="79"/>
    </location>
</feature>
<feature type="short sequence motif" description="D-box 2" evidence="1">
    <location>
        <begin position="96"/>
        <end position="105"/>
    </location>
</feature>
<feature type="short sequence motif" description="D-box 3" evidence="1">
    <location>
        <begin position="161"/>
        <end position="169"/>
    </location>
</feature>
<feature type="short sequence motif" description="KEN box 2" evidence="1">
    <location>
        <begin position="224"/>
        <end position="226"/>
    </location>
</feature>
<feature type="short sequence motif" description="KEN box 3" evidence="1">
    <location>
        <begin position="785"/>
        <end position="787"/>
    </location>
</feature>
<feature type="compositionally biased region" description="Polar residues" evidence="6">
    <location>
        <begin position="137"/>
        <end position="149"/>
    </location>
</feature>
<feature type="compositionally biased region" description="Basic and acidic residues" evidence="6">
    <location>
        <begin position="150"/>
        <end position="160"/>
    </location>
</feature>
<feature type="compositionally biased region" description="Low complexity" evidence="6">
    <location>
        <begin position="183"/>
        <end position="201"/>
    </location>
</feature>
<feature type="compositionally biased region" description="Basic and acidic residues" evidence="6">
    <location>
        <begin position="246"/>
        <end position="260"/>
    </location>
</feature>
<feature type="compositionally biased region" description="Polar residues" evidence="6">
    <location>
        <begin position="282"/>
        <end position="301"/>
    </location>
</feature>
<feature type="compositionally biased region" description="Basic and acidic residues" evidence="6">
    <location>
        <begin position="684"/>
        <end position="698"/>
    </location>
</feature>
<feature type="compositionally biased region" description="Basic and acidic residues" evidence="6">
    <location>
        <begin position="720"/>
        <end position="735"/>
    </location>
</feature>
<feature type="compositionally biased region" description="Basic and acidic residues" evidence="6">
    <location>
        <begin position="777"/>
        <end position="789"/>
    </location>
</feature>
<feature type="active site" description="Nucleophile" evidence="2 4 5">
    <location>
        <position position="352"/>
    </location>
</feature>
<feature type="active site" description="Proton acceptor" evidence="4 5">
    <location>
        <position position="909"/>
    </location>
</feature>
<feature type="modified residue" description="Phosphoserine" evidence="2">
    <location>
        <position position="115"/>
    </location>
</feature>
<feature type="modified residue" description="Phosphoserine" evidence="2">
    <location>
        <position position="171"/>
    </location>
</feature>
<feature type="modified residue" description="Phosphoserine" evidence="2">
    <location>
        <position position="213"/>
    </location>
</feature>
<feature type="modified residue" description="Phosphoserine; by CDK2" evidence="2">
    <location>
        <position position="631"/>
    </location>
</feature>
<feature type="modified residue" description="Phosphoserine" evidence="2">
    <location>
        <position position="653"/>
    </location>
</feature>
<feature type="modified residue" description="Phosphoserine" evidence="2">
    <location>
        <position position="655"/>
    </location>
</feature>
<feature type="modified residue" description="Phosphoserine" evidence="2">
    <location>
        <position position="773"/>
    </location>
</feature>
<name>UBP37_PIG</name>
<sequence>MSPLKIQGPIRIRSMQTGITKWKEGSFEIVEKENKVSLVVHYNTGGIPRIFQLSHNIKNVVLRPSGAKQSRLMLTLQDNSFLSIDKVPSKDAEEMRLFLDAVHQNRLNAVAMKPSQGSGSFGAILGSRTSQKETHRQLSYSDNQVSSKRGSLETKDDIPFRKVLGNPGRASIKTAAGSGITATRTIPSLTSTSTPLRSGLLENRTEKRKRMLSSGSELNEDYPKENDSSSNNKAMTDPSRKYLTSSREKQLSLKQSEENRTSGLLPLQSSSFYGSRAASKDYSPSSTNLDRTNISSQTPSAKRSLGFLPQPAPLSVKKLRCNQDYTGWNKPRLPLSSHQQQLQGFSNLGNTCYMNAILQSLFSLQSFANDLLKQGIPWKKIPLNALISRRFAHLLVKKDICNSETKKDLLKKVKNAISATAERFSGYMQNDAHEFLSQCLDQLKEDMEKLNKTWKTEPVPGEENSPDVTATRVYTCPVITNLEFEVQHSIICKACGEIIPKREQFNDLSIDLPRRKKPLPPRSIQDSLDLFFRAEELEYSCEKCGGKCALVRHKFNRLPRILILHLKRYSFNVALSLNNKIGQQVIIPRYLTLSSHCTENTKPPFNLGWSAQMAISRPLKASQMVNSCITSPSTPSKNFTFKSKSSLALSLDSDSEDELKRSVALSQRLCEISSSEQQQEDLEKDSKSCKLEPDKSELENSGFDAMSEEELLAAVLEISKREASPSPSHEDDDKPTSSPDTGFAEDDIQEMPENPDPMETEKPKTITEPDPASFTEITKDCDENKENKTPEGSQGEVDWLQQYDMEREREEQELQQALAQSLQEQEAWEQKEDDDLKRATELSLQEFNNSFLDSLGSDEDSGNEDVLDMEYTEAEAEELKRNAETGNLPHSYRLISVVSHIGSTSSSGHYISDVYDIKKQAWFTYNDLEVSKIQEASVQSDRDRSGYIFFYMHKEIFDELLETEKNSQALSMEVGKTTRQAS</sequence>
<keyword id="KW-0131">Cell cycle</keyword>
<keyword id="KW-0132">Cell division</keyword>
<keyword id="KW-0158">Chromosome</keyword>
<keyword id="KW-0378">Hydrolase</keyword>
<keyword id="KW-0498">Mitosis</keyword>
<keyword id="KW-0539">Nucleus</keyword>
<keyword id="KW-0597">Phosphoprotein</keyword>
<keyword id="KW-0645">Protease</keyword>
<keyword id="KW-1185">Reference proteome</keyword>
<keyword id="KW-0677">Repeat</keyword>
<keyword id="KW-0788">Thiol protease</keyword>
<keyword id="KW-0832">Ubl conjugation</keyword>
<keyword id="KW-0833">Ubl conjugation pathway</keyword>